<organism>
    <name type="scientific">Aspergillus oryzae (strain ATCC 42149 / RIB 40)</name>
    <name type="common">Yellow koji mold</name>
    <dbReference type="NCBI Taxonomy" id="510516"/>
    <lineage>
        <taxon>Eukaryota</taxon>
        <taxon>Fungi</taxon>
        <taxon>Dikarya</taxon>
        <taxon>Ascomycota</taxon>
        <taxon>Pezizomycotina</taxon>
        <taxon>Eurotiomycetes</taxon>
        <taxon>Eurotiomycetidae</taxon>
        <taxon>Eurotiales</taxon>
        <taxon>Aspergillaceae</taxon>
        <taxon>Aspergillus</taxon>
        <taxon>Aspergillus subgen. Circumdati</taxon>
    </lineage>
</organism>
<dbReference type="EC" id="5.5.1.19" evidence="1"/>
<dbReference type="EC" id="2.5.1.32" evidence="1"/>
<dbReference type="EMBL" id="BA000054">
    <property type="protein sequence ID" value="BAE63386.1"/>
    <property type="molecule type" value="Genomic_DNA"/>
</dbReference>
<dbReference type="RefSeq" id="XP_001824519.1">
    <property type="nucleotide sequence ID" value="XM_001824467.1"/>
</dbReference>
<dbReference type="SMR" id="Q2U4X9"/>
<dbReference type="STRING" id="510516.Q2U4X9"/>
<dbReference type="EnsemblFungi" id="BAE63386">
    <property type="protein sequence ID" value="BAE63386"/>
    <property type="gene ID" value="AO090020000159"/>
</dbReference>
<dbReference type="GeneID" id="5996605"/>
<dbReference type="KEGG" id="aor:AO090020000159"/>
<dbReference type="VEuPathDB" id="FungiDB:AO090020000159"/>
<dbReference type="HOGENOM" id="CLU_012965_0_0_1"/>
<dbReference type="OMA" id="YWPFMTR"/>
<dbReference type="OrthoDB" id="46914at5052"/>
<dbReference type="UniPathway" id="UPA00799">
    <property type="reaction ID" value="UER00773"/>
</dbReference>
<dbReference type="UniPathway" id="UPA00802"/>
<dbReference type="Proteomes" id="UP000006564">
    <property type="component" value="Chromosome 6"/>
</dbReference>
<dbReference type="GO" id="GO:0016020">
    <property type="term" value="C:membrane"/>
    <property type="evidence" value="ECO:0007669"/>
    <property type="project" value="UniProtKB-SubCell"/>
</dbReference>
<dbReference type="GO" id="GO:0004311">
    <property type="term" value="F:geranylgeranyl diphosphate synthase activity"/>
    <property type="evidence" value="ECO:0007669"/>
    <property type="project" value="InterPro"/>
</dbReference>
<dbReference type="GO" id="GO:0016872">
    <property type="term" value="F:intramolecular lyase activity"/>
    <property type="evidence" value="ECO:0007669"/>
    <property type="project" value="InterPro"/>
</dbReference>
<dbReference type="GO" id="GO:0045436">
    <property type="term" value="F:lycopene beta cyclase activity"/>
    <property type="evidence" value="ECO:0007669"/>
    <property type="project" value="RHEA"/>
</dbReference>
<dbReference type="GO" id="GO:0016117">
    <property type="term" value="P:carotenoid biosynthetic process"/>
    <property type="evidence" value="ECO:0007669"/>
    <property type="project" value="UniProtKB-KW"/>
</dbReference>
<dbReference type="Gene3D" id="1.10.600.10">
    <property type="entry name" value="Farnesyl Diphosphate Synthase"/>
    <property type="match status" value="1"/>
</dbReference>
<dbReference type="InterPro" id="IPR008949">
    <property type="entry name" value="Isoprenoid_synthase_dom_sf"/>
</dbReference>
<dbReference type="InterPro" id="IPR017825">
    <property type="entry name" value="Lycopene_cyclase_dom"/>
</dbReference>
<dbReference type="InterPro" id="IPR002060">
    <property type="entry name" value="Squ/phyt_synthse"/>
</dbReference>
<dbReference type="InterPro" id="IPR044843">
    <property type="entry name" value="Trans_IPPS_bact-type"/>
</dbReference>
<dbReference type="NCBIfam" id="TIGR03462">
    <property type="entry name" value="CarR_dom_SF"/>
    <property type="match status" value="2"/>
</dbReference>
<dbReference type="PANTHER" id="PTHR31480">
    <property type="entry name" value="BIFUNCTIONAL LYCOPENE CYCLASE/PHYTOENE SYNTHASE"/>
    <property type="match status" value="1"/>
</dbReference>
<dbReference type="Pfam" id="PF00494">
    <property type="entry name" value="SQS_PSY"/>
    <property type="match status" value="1"/>
</dbReference>
<dbReference type="SFLD" id="SFLDG01212">
    <property type="entry name" value="Phytoene_synthase_like"/>
    <property type="match status" value="1"/>
</dbReference>
<dbReference type="SFLD" id="SFLDG01018">
    <property type="entry name" value="Squalene/Phytoene_Synthase_Lik"/>
    <property type="match status" value="1"/>
</dbReference>
<dbReference type="SUPFAM" id="SSF48576">
    <property type="entry name" value="Terpenoid synthases"/>
    <property type="match status" value="1"/>
</dbReference>
<reference key="1">
    <citation type="journal article" date="2005" name="Nature">
        <title>Genome sequencing and analysis of Aspergillus oryzae.</title>
        <authorList>
            <person name="Machida M."/>
            <person name="Asai K."/>
            <person name="Sano M."/>
            <person name="Tanaka T."/>
            <person name="Kumagai T."/>
            <person name="Terai G."/>
            <person name="Kusumoto K."/>
            <person name="Arima T."/>
            <person name="Akita O."/>
            <person name="Kashiwagi Y."/>
            <person name="Abe K."/>
            <person name="Gomi K."/>
            <person name="Horiuchi H."/>
            <person name="Kitamoto K."/>
            <person name="Kobayashi T."/>
            <person name="Takeuchi M."/>
            <person name="Denning D.W."/>
            <person name="Galagan J.E."/>
            <person name="Nierman W.C."/>
            <person name="Yu J."/>
            <person name="Archer D.B."/>
            <person name="Bennett J.W."/>
            <person name="Bhatnagar D."/>
            <person name="Cleveland T.E."/>
            <person name="Fedorova N.D."/>
            <person name="Gotoh O."/>
            <person name="Horikawa H."/>
            <person name="Hosoyama A."/>
            <person name="Ichinomiya M."/>
            <person name="Igarashi R."/>
            <person name="Iwashita K."/>
            <person name="Juvvadi P.R."/>
            <person name="Kato M."/>
            <person name="Kato Y."/>
            <person name="Kin T."/>
            <person name="Kokubun A."/>
            <person name="Maeda H."/>
            <person name="Maeyama N."/>
            <person name="Maruyama J."/>
            <person name="Nagasaki H."/>
            <person name="Nakajima T."/>
            <person name="Oda K."/>
            <person name="Okada K."/>
            <person name="Paulsen I."/>
            <person name="Sakamoto K."/>
            <person name="Sawano T."/>
            <person name="Takahashi M."/>
            <person name="Takase K."/>
            <person name="Terabayashi Y."/>
            <person name="Wortman J.R."/>
            <person name="Yamada O."/>
            <person name="Yamagata Y."/>
            <person name="Anazawa H."/>
            <person name="Hata Y."/>
            <person name="Koide Y."/>
            <person name="Komori T."/>
            <person name="Koyama Y."/>
            <person name="Minetoki T."/>
            <person name="Suharnan S."/>
            <person name="Tanaka A."/>
            <person name="Isono K."/>
            <person name="Kuhara S."/>
            <person name="Ogasawara N."/>
            <person name="Kikuchi H."/>
        </authorList>
    </citation>
    <scope>NUCLEOTIDE SEQUENCE [LARGE SCALE GENOMIC DNA]</scope>
    <source>
        <strain>ATCC 42149 / RIB 40</strain>
    </source>
</reference>
<feature type="chain" id="PRO_0000409233" description="Bifunctional lycopene cyclase/phytoene synthase">
    <location>
        <begin position="1"/>
        <end position="587"/>
    </location>
</feature>
<feature type="transmembrane region" description="Helical" evidence="2">
    <location>
        <begin position="5"/>
        <end position="25"/>
    </location>
</feature>
<feature type="transmembrane region" description="Helical" evidence="2">
    <location>
        <begin position="35"/>
        <end position="55"/>
    </location>
</feature>
<feature type="transmembrane region" description="Helical" evidence="2">
    <location>
        <begin position="65"/>
        <end position="85"/>
    </location>
</feature>
<feature type="transmembrane region" description="Helical" evidence="2">
    <location>
        <begin position="91"/>
        <end position="111"/>
    </location>
</feature>
<feature type="transmembrane region" description="Helical" evidence="2">
    <location>
        <begin position="116"/>
        <end position="136"/>
    </location>
</feature>
<feature type="transmembrane region" description="Helical" evidence="2">
    <location>
        <begin position="145"/>
        <end position="165"/>
    </location>
</feature>
<feature type="transmembrane region" description="Helical" evidence="2">
    <location>
        <begin position="218"/>
        <end position="238"/>
    </location>
</feature>
<feature type="region of interest" description="Lycopene beta-cyclase" evidence="1">
    <location>
        <begin position="1"/>
        <end position="236"/>
    </location>
</feature>
<feature type="region of interest" description="Phytoene synthase" evidence="1">
    <location>
        <begin position="243"/>
        <end position="587"/>
    </location>
</feature>
<accession>Q2U4X9</accession>
<name>LCPS_ASPOR</name>
<protein>
    <recommendedName>
        <fullName evidence="1">Bifunctional lycopene cyclase/phytoene synthase</fullName>
    </recommendedName>
    <domain>
        <recommendedName>
            <fullName evidence="1">Lycopene beta-cyclase</fullName>
            <ecNumber evidence="1">5.5.1.19</ecNumber>
        </recommendedName>
        <alternativeName>
            <fullName evidence="1">Lycopene cyclase</fullName>
        </alternativeName>
    </domain>
    <domain>
        <recommendedName>
            <fullName evidence="1">Phytoene synthase</fullName>
            <ecNumber evidence="1">2.5.1.32</ecNumber>
        </recommendedName>
    </domain>
</protein>
<gene>
    <name type="ORF">AO090020000159</name>
</gene>
<keyword id="KW-0125">Carotenoid biosynthesis</keyword>
<keyword id="KW-0413">Isomerase</keyword>
<keyword id="KW-0472">Membrane</keyword>
<keyword id="KW-0511">Multifunctional enzyme</keyword>
<keyword id="KW-1185">Reference proteome</keyword>
<keyword id="KW-0808">Transferase</keyword>
<keyword id="KW-0812">Transmembrane</keyword>
<keyword id="KW-1133">Transmembrane helix</keyword>
<proteinExistence type="inferred from homology"/>
<evidence type="ECO:0000250" key="1">
    <source>
        <dbReference type="UniProtKB" id="P37295"/>
    </source>
</evidence>
<evidence type="ECO:0000255" key="2"/>
<evidence type="ECO:0000305" key="3"/>
<comment type="function">
    <text evidence="1">Bifunctional enzyme that catalyzes the reactions from geranylgeranyl diphosphate to phytoene (phytoene synthase) and lycopene to beta-carotene via the intermediate gamma-carotene (lycopene cyclase).</text>
</comment>
<comment type="catalytic activity">
    <reaction evidence="1">
        <text>all-trans-lycopene = gamma-carotene</text>
        <dbReference type="Rhea" id="RHEA:32219"/>
        <dbReference type="ChEBI" id="CHEBI:15948"/>
        <dbReference type="ChEBI" id="CHEBI:27740"/>
        <dbReference type="EC" id="5.5.1.19"/>
    </reaction>
</comment>
<comment type="catalytic activity">
    <reaction evidence="1">
        <text>gamma-carotene = all-trans-beta-carotene</text>
        <dbReference type="Rhea" id="RHEA:32239"/>
        <dbReference type="ChEBI" id="CHEBI:17579"/>
        <dbReference type="ChEBI" id="CHEBI:27740"/>
        <dbReference type="EC" id="5.5.1.19"/>
    </reaction>
</comment>
<comment type="catalytic activity">
    <reaction evidence="1">
        <text>2 (2E,6E,10E)-geranylgeranyl diphosphate = 15-cis-phytoene + 2 diphosphate</text>
        <dbReference type="Rhea" id="RHEA:34475"/>
        <dbReference type="ChEBI" id="CHEBI:27787"/>
        <dbReference type="ChEBI" id="CHEBI:33019"/>
        <dbReference type="ChEBI" id="CHEBI:58756"/>
        <dbReference type="EC" id="2.5.1.32"/>
    </reaction>
</comment>
<comment type="pathway">
    <text evidence="1">Carotenoid biosynthesis; beta-carotene biosynthesis.</text>
</comment>
<comment type="pathway">
    <text evidence="1">Carotenoid biosynthesis; phytoene biosynthesis; all-trans-phytoene from geranylgeranyl diphosphate: step 1/1.</text>
</comment>
<comment type="subcellular location">
    <subcellularLocation>
        <location evidence="3">Membrane</location>
        <topology evidence="3">Multi-pass membrane protein</topology>
    </subcellularLocation>
</comment>
<comment type="similarity">
    <text evidence="3">In the N-terminal section; belongs to the lycopene beta-cyclase family.</text>
</comment>
<comment type="similarity">
    <text evidence="3">In the C-terminal section; belongs to the phytoene/squalene synthase family.</text>
</comment>
<sequence>MGLDYILVHVTYNIPLAGILTLVYWPFMTRLDWQKISTLVIISLVATIPWDSYLVRHRIWTYAPNGVIGWTLYDIPSEEVFFFIIQTYNTSLVYLILTRWLVLPMYLGTVARKETLIGASILLLAISVGLIALCFGDHFTYFGMIITWAGPFLLIQWVFSSGFIIALPKLELMVSITLPTLFLWTVDTISINQGTWTVEAPTKLGVQLWSGMDIEEVLFFLITNIVIVFGLVCIDYAIAMATCELVQSPQAVQSFPSYFRVLARFVTNKYHPDKQFVASLRKAVDRLAASSQSMYMGSAMFQGPFRIDLILLYSFFRVADDLVDESQDTESARMIIEQCDQLLEAKFSHPELFPFSPGYQEAKHPAPPELIAAIDSLPVSRLRLEHLKGLIEGFRTDLTFSAKPGSFPFVTESDLDTYAYHVASSVAASMLGLVVHHFPDHQFAINVFLRRRVVDAGERMGQTLQYINVARDIARDAAINRVYLPTTWLKQQGLGPEDVLASPTDSRLELVRDRLLDRAEFLSASAREEMKFLPDEVQGPFLATVDSYLEIGAALRRGMRPRTLDDKLRLPLGTRLWVAYRAMAWRK</sequence>